<evidence type="ECO:0000255" key="1">
    <source>
        <dbReference type="HAMAP-Rule" id="MF_01368"/>
    </source>
</evidence>
<evidence type="ECO:0000305" key="2"/>
<protein>
    <recommendedName>
        <fullName evidence="1">Large ribosomal subunit protein bL17</fullName>
    </recommendedName>
    <alternativeName>
        <fullName evidence="2">50S ribosomal protein L17</fullName>
    </alternativeName>
</protein>
<keyword id="KW-0687">Ribonucleoprotein</keyword>
<keyword id="KW-0689">Ribosomal protein</keyword>
<feature type="chain" id="PRO_1000144406" description="Large ribosomal subunit protein bL17">
    <location>
        <begin position="1"/>
        <end position="126"/>
    </location>
</feature>
<dbReference type="EMBL" id="CP001020">
    <property type="protein sequence ID" value="ACJ19742.1"/>
    <property type="molecule type" value="Genomic_DNA"/>
</dbReference>
<dbReference type="RefSeq" id="WP_005771494.1">
    <property type="nucleotide sequence ID" value="NC_011528.1"/>
</dbReference>
<dbReference type="SMR" id="B6J5F8"/>
<dbReference type="KEGG" id="cbc:CbuK_0459"/>
<dbReference type="HOGENOM" id="CLU_074407_2_0_6"/>
<dbReference type="GO" id="GO:0022625">
    <property type="term" value="C:cytosolic large ribosomal subunit"/>
    <property type="evidence" value="ECO:0007669"/>
    <property type="project" value="TreeGrafter"/>
</dbReference>
<dbReference type="GO" id="GO:0003735">
    <property type="term" value="F:structural constituent of ribosome"/>
    <property type="evidence" value="ECO:0007669"/>
    <property type="project" value="InterPro"/>
</dbReference>
<dbReference type="GO" id="GO:0006412">
    <property type="term" value="P:translation"/>
    <property type="evidence" value="ECO:0007669"/>
    <property type="project" value="UniProtKB-UniRule"/>
</dbReference>
<dbReference type="FunFam" id="3.90.1030.10:FF:000001">
    <property type="entry name" value="50S ribosomal protein L17"/>
    <property type="match status" value="1"/>
</dbReference>
<dbReference type="Gene3D" id="3.90.1030.10">
    <property type="entry name" value="Ribosomal protein L17"/>
    <property type="match status" value="1"/>
</dbReference>
<dbReference type="HAMAP" id="MF_01368">
    <property type="entry name" value="Ribosomal_bL17"/>
    <property type="match status" value="1"/>
</dbReference>
<dbReference type="InterPro" id="IPR000456">
    <property type="entry name" value="Ribosomal_bL17"/>
</dbReference>
<dbReference type="InterPro" id="IPR047859">
    <property type="entry name" value="Ribosomal_bL17_CS"/>
</dbReference>
<dbReference type="InterPro" id="IPR036373">
    <property type="entry name" value="Ribosomal_bL17_sf"/>
</dbReference>
<dbReference type="NCBIfam" id="TIGR00059">
    <property type="entry name" value="L17"/>
    <property type="match status" value="1"/>
</dbReference>
<dbReference type="PANTHER" id="PTHR14413:SF16">
    <property type="entry name" value="LARGE RIBOSOMAL SUBUNIT PROTEIN BL17M"/>
    <property type="match status" value="1"/>
</dbReference>
<dbReference type="PANTHER" id="PTHR14413">
    <property type="entry name" value="RIBOSOMAL PROTEIN L17"/>
    <property type="match status" value="1"/>
</dbReference>
<dbReference type="Pfam" id="PF01196">
    <property type="entry name" value="Ribosomal_L17"/>
    <property type="match status" value="1"/>
</dbReference>
<dbReference type="SUPFAM" id="SSF64263">
    <property type="entry name" value="Prokaryotic ribosomal protein L17"/>
    <property type="match status" value="1"/>
</dbReference>
<dbReference type="PROSITE" id="PS01167">
    <property type="entry name" value="RIBOSOMAL_L17"/>
    <property type="match status" value="1"/>
</dbReference>
<accession>B6J5F8</accession>
<name>RL17_COXB1</name>
<gene>
    <name evidence="1" type="primary">rplQ</name>
    <name type="ordered locus">CbuK_0459</name>
</gene>
<comment type="subunit">
    <text evidence="1">Part of the 50S ribosomal subunit. Contacts protein L32.</text>
</comment>
<comment type="similarity">
    <text evidence="1">Belongs to the bacterial ribosomal protein bL17 family.</text>
</comment>
<organism>
    <name type="scientific">Coxiella burnetii (strain CbuK_Q154)</name>
    <name type="common">Coxiella burnetii (strain Q154)</name>
    <dbReference type="NCBI Taxonomy" id="434924"/>
    <lineage>
        <taxon>Bacteria</taxon>
        <taxon>Pseudomonadati</taxon>
        <taxon>Pseudomonadota</taxon>
        <taxon>Gammaproteobacteria</taxon>
        <taxon>Legionellales</taxon>
        <taxon>Coxiellaceae</taxon>
        <taxon>Coxiella</taxon>
    </lineage>
</organism>
<proteinExistence type="inferred from homology"/>
<sequence>MHHRKSGRHLNRTSAHRKAMLRNMAVSLFQHELIKTTLPKAKELRRVVEPLITLAKEDTVANRRLAFNRLRDDAIVTKLFKEIAPRHKERPGGYCRVLKYGFRNGDSAPMAIVELVDREESESSED</sequence>
<reference key="1">
    <citation type="journal article" date="2009" name="Infect. Immun.">
        <title>Comparative genomics reveal extensive transposon-mediated genomic plasticity and diversity among potential effector proteins within the genus Coxiella.</title>
        <authorList>
            <person name="Beare P.A."/>
            <person name="Unsworth N."/>
            <person name="Andoh M."/>
            <person name="Voth D.E."/>
            <person name="Omsland A."/>
            <person name="Gilk S.D."/>
            <person name="Williams K.P."/>
            <person name="Sobral B.W."/>
            <person name="Kupko J.J. III"/>
            <person name="Porcella S.F."/>
            <person name="Samuel J.E."/>
            <person name="Heinzen R.A."/>
        </authorList>
    </citation>
    <scope>NUCLEOTIDE SEQUENCE [LARGE SCALE GENOMIC DNA]</scope>
    <source>
        <strain>CbuK_Q154</strain>
    </source>
</reference>